<reference key="1">
    <citation type="journal article" date="2007" name="PLoS Genet.">
        <title>A tale of two oxidation states: bacterial colonization of arsenic-rich environments.</title>
        <authorList>
            <person name="Muller D."/>
            <person name="Medigue C."/>
            <person name="Koechler S."/>
            <person name="Barbe V."/>
            <person name="Barakat M."/>
            <person name="Talla E."/>
            <person name="Bonnefoy V."/>
            <person name="Krin E."/>
            <person name="Arsene-Ploetze F."/>
            <person name="Carapito C."/>
            <person name="Chandler M."/>
            <person name="Cournoyer B."/>
            <person name="Cruveiller S."/>
            <person name="Dossat C."/>
            <person name="Duval S."/>
            <person name="Heymann M."/>
            <person name="Leize E."/>
            <person name="Lieutaud A."/>
            <person name="Lievremont D."/>
            <person name="Makita Y."/>
            <person name="Mangenot S."/>
            <person name="Nitschke W."/>
            <person name="Ortet P."/>
            <person name="Perdrial N."/>
            <person name="Schoepp B."/>
            <person name="Siguier P."/>
            <person name="Simeonova D.D."/>
            <person name="Rouy Z."/>
            <person name="Segurens B."/>
            <person name="Turlin E."/>
            <person name="Vallenet D."/>
            <person name="van Dorsselaer A."/>
            <person name="Weiss S."/>
            <person name="Weissenbach J."/>
            <person name="Lett M.-C."/>
            <person name="Danchin A."/>
            <person name="Bertin P.N."/>
        </authorList>
    </citation>
    <scope>NUCLEOTIDE SEQUENCE [LARGE SCALE GENOMIC DNA]</scope>
    <source>
        <strain>ULPAs1</strain>
    </source>
</reference>
<feature type="chain" id="PRO_1000008254" description="Translation initiation factor IF-2">
    <location>
        <begin position="1"/>
        <end position="941"/>
    </location>
</feature>
<feature type="domain" description="tr-type G">
    <location>
        <begin position="441"/>
        <end position="610"/>
    </location>
</feature>
<feature type="region of interest" description="Disordered" evidence="3">
    <location>
        <begin position="170"/>
        <end position="228"/>
    </location>
</feature>
<feature type="region of interest" description="Disordered" evidence="3">
    <location>
        <begin position="252"/>
        <end position="351"/>
    </location>
</feature>
<feature type="region of interest" description="G1" evidence="1">
    <location>
        <begin position="450"/>
        <end position="457"/>
    </location>
</feature>
<feature type="region of interest" description="G2" evidence="1">
    <location>
        <begin position="475"/>
        <end position="479"/>
    </location>
</feature>
<feature type="region of interest" description="G3" evidence="1">
    <location>
        <begin position="496"/>
        <end position="499"/>
    </location>
</feature>
<feature type="region of interest" description="G4" evidence="1">
    <location>
        <begin position="550"/>
        <end position="553"/>
    </location>
</feature>
<feature type="region of interest" description="G5" evidence="1">
    <location>
        <begin position="586"/>
        <end position="588"/>
    </location>
</feature>
<feature type="compositionally biased region" description="Basic and acidic residues" evidence="3">
    <location>
        <begin position="170"/>
        <end position="209"/>
    </location>
</feature>
<feature type="compositionally biased region" description="Low complexity" evidence="3">
    <location>
        <begin position="256"/>
        <end position="269"/>
    </location>
</feature>
<feature type="compositionally biased region" description="Basic and acidic residues" evidence="3">
    <location>
        <begin position="271"/>
        <end position="297"/>
    </location>
</feature>
<feature type="compositionally biased region" description="Polar residues" evidence="3">
    <location>
        <begin position="299"/>
        <end position="308"/>
    </location>
</feature>
<feature type="binding site" evidence="2">
    <location>
        <begin position="450"/>
        <end position="457"/>
    </location>
    <ligand>
        <name>GTP</name>
        <dbReference type="ChEBI" id="CHEBI:37565"/>
    </ligand>
</feature>
<feature type="binding site" evidence="2">
    <location>
        <begin position="496"/>
        <end position="500"/>
    </location>
    <ligand>
        <name>GTP</name>
        <dbReference type="ChEBI" id="CHEBI:37565"/>
    </ligand>
</feature>
<feature type="binding site" evidence="2">
    <location>
        <begin position="550"/>
        <end position="553"/>
    </location>
    <ligand>
        <name>GTP</name>
        <dbReference type="ChEBI" id="CHEBI:37565"/>
    </ligand>
</feature>
<protein>
    <recommendedName>
        <fullName evidence="2">Translation initiation factor IF-2</fullName>
    </recommendedName>
</protein>
<gene>
    <name evidence="2" type="primary">infB</name>
    <name type="ordered locus">HEAR2433</name>
</gene>
<evidence type="ECO:0000250" key="1"/>
<evidence type="ECO:0000255" key="2">
    <source>
        <dbReference type="HAMAP-Rule" id="MF_00100"/>
    </source>
</evidence>
<evidence type="ECO:0000256" key="3">
    <source>
        <dbReference type="SAM" id="MobiDB-lite"/>
    </source>
</evidence>
<sequence length="941" mass="101593">MASNNVAQFATELKMPADVLLTQLRDAGVEKSSTSDELSKADKDKLLEHLRRAHGVAPDGEKKKITLMRKETTEIKQADATGKSRTIQVEVRKKRTFVKRDEPAAEEAPVVVAAPIIDAAEVERRAEESRRHAELMARQEADLREKQERLAKLEAEKETQAKALKKAEVDAQKAEVDAQKAEAEKPVEVKADESAIEEKKRVAAEESKKKAAAAAKEAAKEANEKAAATELARKVVADEVAQIKAMMNAPRRAIKAPEPVAPVAKPAAEGTLHKPADKKPGEKKDEKKPAVTADKKSIKSANVSSTWQDDAKKRSAGIKTRGNTGGGRDGWRAGTKGRRQSHHDDRESNFQAPTEAVVKDVQVPETITVAELAHKMSVKASEVIKQLMKLGQMCTINQVLDQETAMILVEEMGHVAHAAKLDDPEALLEIGAEQADVEALPRAPVVTVMGHVDHGKTSLLDYIRRAKVATGEAGGITQHIGAYHVETPRGMITFLDTPGHEAFTAMRARGAKATDIVILVVAADDGVMPQTKEAIAHAKAAGVPLVVAINKIDKPSANLDRVKQELIAEQVVPEEYGGDSPFVPVSAKTGEGIDALLEQVLLQAEVLELKAPVVSPARGLVVEAKLDKGRGPVATILVQSGTLRRGDVVLAGSAYGRVRAMLDENGKSISEAGPSIPVEIQGLTEVPNAGEEVMVMADERKAREIGLFRQGKFRDVKLAKQQAAKLENMFENMGEGEVKNLPMIIKTDVQGSQEALVGSLQKLSTGEVRVQVVHAAVGGISESDVNLAVASKAVIIGFNTRADASARKLAEANGVDIRYYNIIYDAVDEIKAAMSGMLSPEKREQALGLVEIRQVILVSKVGAIAGCYVLEGVVKRGASVRLLRDNVVIWTGELDSLKRFKDDAKEVKFGFECGLTLKNFNDIKEGDQLEVFEVQEIARTL</sequence>
<dbReference type="EMBL" id="CU207211">
    <property type="protein sequence ID" value="CAL62564.1"/>
    <property type="molecule type" value="Genomic_DNA"/>
</dbReference>
<dbReference type="SMR" id="A4G7S7"/>
<dbReference type="STRING" id="204773.HEAR2433"/>
<dbReference type="KEGG" id="har:HEAR2433"/>
<dbReference type="eggNOG" id="COG0532">
    <property type="taxonomic scope" value="Bacteria"/>
</dbReference>
<dbReference type="HOGENOM" id="CLU_006301_6_0_4"/>
<dbReference type="OrthoDB" id="9811804at2"/>
<dbReference type="Proteomes" id="UP000006697">
    <property type="component" value="Chromosome"/>
</dbReference>
<dbReference type="GO" id="GO:0005829">
    <property type="term" value="C:cytosol"/>
    <property type="evidence" value="ECO:0007669"/>
    <property type="project" value="TreeGrafter"/>
</dbReference>
<dbReference type="GO" id="GO:0005525">
    <property type="term" value="F:GTP binding"/>
    <property type="evidence" value="ECO:0007669"/>
    <property type="project" value="UniProtKB-KW"/>
</dbReference>
<dbReference type="GO" id="GO:0003924">
    <property type="term" value="F:GTPase activity"/>
    <property type="evidence" value="ECO:0007669"/>
    <property type="project" value="UniProtKB-UniRule"/>
</dbReference>
<dbReference type="GO" id="GO:0097216">
    <property type="term" value="F:guanosine tetraphosphate binding"/>
    <property type="evidence" value="ECO:0007669"/>
    <property type="project" value="UniProtKB-ARBA"/>
</dbReference>
<dbReference type="GO" id="GO:0003743">
    <property type="term" value="F:translation initiation factor activity"/>
    <property type="evidence" value="ECO:0007669"/>
    <property type="project" value="UniProtKB-UniRule"/>
</dbReference>
<dbReference type="CDD" id="cd01887">
    <property type="entry name" value="IF2_eIF5B"/>
    <property type="match status" value="1"/>
</dbReference>
<dbReference type="CDD" id="cd03702">
    <property type="entry name" value="IF2_mtIF2_II"/>
    <property type="match status" value="1"/>
</dbReference>
<dbReference type="CDD" id="cd03692">
    <property type="entry name" value="mtIF2_IVc"/>
    <property type="match status" value="1"/>
</dbReference>
<dbReference type="FunFam" id="2.40.30.10:FF:000007">
    <property type="entry name" value="Translation initiation factor IF-2"/>
    <property type="match status" value="1"/>
</dbReference>
<dbReference type="FunFam" id="2.40.30.10:FF:000008">
    <property type="entry name" value="Translation initiation factor IF-2"/>
    <property type="match status" value="1"/>
</dbReference>
<dbReference type="FunFam" id="3.40.50.10050:FF:000001">
    <property type="entry name" value="Translation initiation factor IF-2"/>
    <property type="match status" value="1"/>
</dbReference>
<dbReference type="FunFam" id="3.40.50.300:FF:000019">
    <property type="entry name" value="Translation initiation factor IF-2"/>
    <property type="match status" value="1"/>
</dbReference>
<dbReference type="Gene3D" id="3.40.50.300">
    <property type="entry name" value="P-loop containing nucleotide triphosphate hydrolases"/>
    <property type="match status" value="1"/>
</dbReference>
<dbReference type="Gene3D" id="3.30.56.50">
    <property type="entry name" value="Putative DNA-binding domain, N-terminal subdomain of bacterial translation initiation factor IF2"/>
    <property type="match status" value="1"/>
</dbReference>
<dbReference type="Gene3D" id="2.40.30.10">
    <property type="entry name" value="Translation factors"/>
    <property type="match status" value="2"/>
</dbReference>
<dbReference type="Gene3D" id="3.40.50.10050">
    <property type="entry name" value="Translation initiation factor IF- 2, domain 3"/>
    <property type="match status" value="1"/>
</dbReference>
<dbReference type="HAMAP" id="MF_00100_B">
    <property type="entry name" value="IF_2_B"/>
    <property type="match status" value="1"/>
</dbReference>
<dbReference type="InterPro" id="IPR009061">
    <property type="entry name" value="DNA-bd_dom_put_sf"/>
</dbReference>
<dbReference type="InterPro" id="IPR053905">
    <property type="entry name" value="EF-G-like_DII"/>
</dbReference>
<dbReference type="InterPro" id="IPR004161">
    <property type="entry name" value="EFTu-like_2"/>
</dbReference>
<dbReference type="InterPro" id="IPR013575">
    <property type="entry name" value="IF2_assoc_dom_bac"/>
</dbReference>
<dbReference type="InterPro" id="IPR044145">
    <property type="entry name" value="IF2_II"/>
</dbReference>
<dbReference type="InterPro" id="IPR006847">
    <property type="entry name" value="IF2_N"/>
</dbReference>
<dbReference type="InterPro" id="IPR027417">
    <property type="entry name" value="P-loop_NTPase"/>
</dbReference>
<dbReference type="InterPro" id="IPR005225">
    <property type="entry name" value="Small_GTP-bd"/>
</dbReference>
<dbReference type="InterPro" id="IPR000795">
    <property type="entry name" value="T_Tr_GTP-bd_dom"/>
</dbReference>
<dbReference type="InterPro" id="IPR000178">
    <property type="entry name" value="TF_IF2_bacterial-like"/>
</dbReference>
<dbReference type="InterPro" id="IPR015760">
    <property type="entry name" value="TIF_IF2"/>
</dbReference>
<dbReference type="InterPro" id="IPR023115">
    <property type="entry name" value="TIF_IF2_dom3"/>
</dbReference>
<dbReference type="InterPro" id="IPR036925">
    <property type="entry name" value="TIF_IF2_dom3_sf"/>
</dbReference>
<dbReference type="InterPro" id="IPR009000">
    <property type="entry name" value="Transl_B-barrel_sf"/>
</dbReference>
<dbReference type="NCBIfam" id="TIGR00487">
    <property type="entry name" value="IF-2"/>
    <property type="match status" value="1"/>
</dbReference>
<dbReference type="NCBIfam" id="TIGR00231">
    <property type="entry name" value="small_GTP"/>
    <property type="match status" value="1"/>
</dbReference>
<dbReference type="PANTHER" id="PTHR43381:SF5">
    <property type="entry name" value="TR-TYPE G DOMAIN-CONTAINING PROTEIN"/>
    <property type="match status" value="1"/>
</dbReference>
<dbReference type="PANTHER" id="PTHR43381">
    <property type="entry name" value="TRANSLATION INITIATION FACTOR IF-2-RELATED"/>
    <property type="match status" value="1"/>
</dbReference>
<dbReference type="Pfam" id="PF22042">
    <property type="entry name" value="EF-G_D2"/>
    <property type="match status" value="1"/>
</dbReference>
<dbReference type="Pfam" id="PF00009">
    <property type="entry name" value="GTP_EFTU"/>
    <property type="match status" value="1"/>
</dbReference>
<dbReference type="Pfam" id="PF03144">
    <property type="entry name" value="GTP_EFTU_D2"/>
    <property type="match status" value="1"/>
</dbReference>
<dbReference type="Pfam" id="PF11987">
    <property type="entry name" value="IF-2"/>
    <property type="match status" value="1"/>
</dbReference>
<dbReference type="Pfam" id="PF08364">
    <property type="entry name" value="IF2_assoc"/>
    <property type="match status" value="1"/>
</dbReference>
<dbReference type="Pfam" id="PF04760">
    <property type="entry name" value="IF2_N"/>
    <property type="match status" value="2"/>
</dbReference>
<dbReference type="SUPFAM" id="SSF52156">
    <property type="entry name" value="Initiation factor IF2/eIF5b, domain 3"/>
    <property type="match status" value="1"/>
</dbReference>
<dbReference type="SUPFAM" id="SSF52540">
    <property type="entry name" value="P-loop containing nucleoside triphosphate hydrolases"/>
    <property type="match status" value="1"/>
</dbReference>
<dbReference type="SUPFAM" id="SSF46955">
    <property type="entry name" value="Putative DNA-binding domain"/>
    <property type="match status" value="1"/>
</dbReference>
<dbReference type="SUPFAM" id="SSF50447">
    <property type="entry name" value="Translation proteins"/>
    <property type="match status" value="2"/>
</dbReference>
<dbReference type="PROSITE" id="PS51722">
    <property type="entry name" value="G_TR_2"/>
    <property type="match status" value="1"/>
</dbReference>
<dbReference type="PROSITE" id="PS01176">
    <property type="entry name" value="IF2"/>
    <property type="match status" value="1"/>
</dbReference>
<comment type="function">
    <text evidence="2">One of the essential components for the initiation of protein synthesis. Protects formylmethionyl-tRNA from spontaneous hydrolysis and promotes its binding to the 30S ribosomal subunits. Also involved in the hydrolysis of GTP during the formation of the 70S ribosomal complex.</text>
</comment>
<comment type="subcellular location">
    <subcellularLocation>
        <location evidence="2">Cytoplasm</location>
    </subcellularLocation>
</comment>
<comment type="similarity">
    <text evidence="2">Belongs to the TRAFAC class translation factor GTPase superfamily. Classic translation factor GTPase family. IF-2 subfamily.</text>
</comment>
<name>IF2_HERAR</name>
<organism>
    <name type="scientific">Herminiimonas arsenicoxydans</name>
    <dbReference type="NCBI Taxonomy" id="204773"/>
    <lineage>
        <taxon>Bacteria</taxon>
        <taxon>Pseudomonadati</taxon>
        <taxon>Pseudomonadota</taxon>
        <taxon>Betaproteobacteria</taxon>
        <taxon>Burkholderiales</taxon>
        <taxon>Oxalobacteraceae</taxon>
        <taxon>Herminiimonas</taxon>
    </lineage>
</organism>
<keyword id="KW-0963">Cytoplasm</keyword>
<keyword id="KW-0342">GTP-binding</keyword>
<keyword id="KW-0396">Initiation factor</keyword>
<keyword id="KW-0547">Nucleotide-binding</keyword>
<keyword id="KW-0648">Protein biosynthesis</keyword>
<keyword id="KW-1185">Reference proteome</keyword>
<proteinExistence type="inferred from homology"/>
<accession>A4G7S7</accession>